<accession>Q6A8C3</accession>
<feature type="chain" id="PRO_0000368674" description="ATP synthase subunit b">
    <location>
        <begin position="1"/>
        <end position="184"/>
    </location>
</feature>
<feature type="transmembrane region" description="Helical" evidence="1">
    <location>
        <begin position="19"/>
        <end position="39"/>
    </location>
</feature>
<comment type="function">
    <text evidence="1">F(1)F(0) ATP synthase produces ATP from ADP in the presence of a proton or sodium gradient. F-type ATPases consist of two structural domains, F(1) containing the extramembraneous catalytic core and F(0) containing the membrane proton channel, linked together by a central stalk and a peripheral stalk. During catalysis, ATP synthesis in the catalytic domain of F(1) is coupled via a rotary mechanism of the central stalk subunits to proton translocation.</text>
</comment>
<comment type="function">
    <text evidence="1">Component of the F(0) channel, it forms part of the peripheral stalk, linking F(1) to F(0).</text>
</comment>
<comment type="subunit">
    <text evidence="1">F-type ATPases have 2 components, F(1) - the catalytic core - and F(0) - the membrane proton channel. F(1) has five subunits: alpha(3), beta(3), gamma(1), delta(1), epsilon(1). F(0) has three main subunits: a(1), b(2) and c(10-14). The alpha and beta chains form an alternating ring which encloses part of the gamma chain. F(1) is attached to F(0) by a central stalk formed by the gamma and epsilon chains, while a peripheral stalk is formed by the delta and b chains.</text>
</comment>
<comment type="subcellular location">
    <subcellularLocation>
        <location evidence="1">Cell membrane</location>
        <topology evidence="1">Single-pass membrane protein</topology>
    </subcellularLocation>
</comment>
<comment type="similarity">
    <text evidence="1">Belongs to the ATPase B chain family.</text>
</comment>
<gene>
    <name evidence="1" type="primary">atpF</name>
    <name type="ordered locus">PPA1243</name>
</gene>
<protein>
    <recommendedName>
        <fullName evidence="1">ATP synthase subunit b</fullName>
    </recommendedName>
    <alternativeName>
        <fullName evidence="1">ATP synthase F(0) sector subunit b</fullName>
    </alternativeName>
    <alternativeName>
        <fullName evidence="1">ATPase subunit I</fullName>
    </alternativeName>
    <alternativeName>
        <fullName evidence="1">F-type ATPase subunit b</fullName>
        <shortName evidence="1">F-ATPase subunit b</shortName>
    </alternativeName>
</protein>
<proteinExistence type="inferred from homology"/>
<evidence type="ECO:0000255" key="1">
    <source>
        <dbReference type="HAMAP-Rule" id="MF_01398"/>
    </source>
</evidence>
<dbReference type="EMBL" id="AE017283">
    <property type="protein sequence ID" value="AAT82992.1"/>
    <property type="molecule type" value="Genomic_DNA"/>
</dbReference>
<dbReference type="RefSeq" id="WP_002516771.1">
    <property type="nucleotide sequence ID" value="NZ_CP025935.1"/>
</dbReference>
<dbReference type="SMR" id="Q6A8C3"/>
<dbReference type="EnsemblBacteria" id="AAT82992">
    <property type="protein sequence ID" value="AAT82992"/>
    <property type="gene ID" value="PPA1243"/>
</dbReference>
<dbReference type="KEGG" id="pac:PPA1243"/>
<dbReference type="PATRIC" id="fig|267747.3.peg.1280"/>
<dbReference type="eggNOG" id="COG0711">
    <property type="taxonomic scope" value="Bacteria"/>
</dbReference>
<dbReference type="HOGENOM" id="CLU_079215_5_1_11"/>
<dbReference type="Proteomes" id="UP000000603">
    <property type="component" value="Chromosome"/>
</dbReference>
<dbReference type="GO" id="GO:0005886">
    <property type="term" value="C:plasma membrane"/>
    <property type="evidence" value="ECO:0007669"/>
    <property type="project" value="UniProtKB-SubCell"/>
</dbReference>
<dbReference type="GO" id="GO:0045259">
    <property type="term" value="C:proton-transporting ATP synthase complex"/>
    <property type="evidence" value="ECO:0007669"/>
    <property type="project" value="UniProtKB-KW"/>
</dbReference>
<dbReference type="GO" id="GO:0046933">
    <property type="term" value="F:proton-transporting ATP synthase activity, rotational mechanism"/>
    <property type="evidence" value="ECO:0007669"/>
    <property type="project" value="UniProtKB-UniRule"/>
</dbReference>
<dbReference type="GO" id="GO:0046961">
    <property type="term" value="F:proton-transporting ATPase activity, rotational mechanism"/>
    <property type="evidence" value="ECO:0007669"/>
    <property type="project" value="TreeGrafter"/>
</dbReference>
<dbReference type="CDD" id="cd06503">
    <property type="entry name" value="ATP-synt_Fo_b"/>
    <property type="match status" value="1"/>
</dbReference>
<dbReference type="Gene3D" id="1.20.5.620">
    <property type="entry name" value="F1F0 ATP synthase subunit B, membrane domain"/>
    <property type="match status" value="1"/>
</dbReference>
<dbReference type="HAMAP" id="MF_01398">
    <property type="entry name" value="ATP_synth_b_bprime"/>
    <property type="match status" value="1"/>
</dbReference>
<dbReference type="InterPro" id="IPR028987">
    <property type="entry name" value="ATP_synth_B-like_membr_sf"/>
</dbReference>
<dbReference type="InterPro" id="IPR002146">
    <property type="entry name" value="ATP_synth_b/b'su_bac/chlpt"/>
</dbReference>
<dbReference type="InterPro" id="IPR005864">
    <property type="entry name" value="ATP_synth_F0_bsu_bac"/>
</dbReference>
<dbReference type="InterPro" id="IPR050059">
    <property type="entry name" value="ATP_synthase_B_chain"/>
</dbReference>
<dbReference type="NCBIfam" id="TIGR01144">
    <property type="entry name" value="ATP_synt_b"/>
    <property type="match status" value="1"/>
</dbReference>
<dbReference type="NCBIfam" id="NF004412">
    <property type="entry name" value="PRK05759.1-3"/>
    <property type="match status" value="1"/>
</dbReference>
<dbReference type="PANTHER" id="PTHR33445:SF1">
    <property type="entry name" value="ATP SYNTHASE SUBUNIT B"/>
    <property type="match status" value="1"/>
</dbReference>
<dbReference type="PANTHER" id="PTHR33445">
    <property type="entry name" value="ATP SYNTHASE SUBUNIT B', CHLOROPLASTIC"/>
    <property type="match status" value="1"/>
</dbReference>
<dbReference type="Pfam" id="PF00430">
    <property type="entry name" value="ATP-synt_B"/>
    <property type="match status" value="1"/>
</dbReference>
<dbReference type="SUPFAM" id="SSF81573">
    <property type="entry name" value="F1F0 ATP synthase subunit B, membrane domain"/>
    <property type="match status" value="1"/>
</dbReference>
<organism>
    <name type="scientific">Cutibacterium acnes (strain DSM 16379 / KPA171202)</name>
    <name type="common">Propionibacterium acnes</name>
    <dbReference type="NCBI Taxonomy" id="267747"/>
    <lineage>
        <taxon>Bacteria</taxon>
        <taxon>Bacillati</taxon>
        <taxon>Actinomycetota</taxon>
        <taxon>Actinomycetes</taxon>
        <taxon>Propionibacteriales</taxon>
        <taxon>Propionibacteriaceae</taxon>
        <taxon>Cutibacterium</taxon>
    </lineage>
</organism>
<name>ATPF_CUTAK</name>
<reference key="1">
    <citation type="journal article" date="2004" name="Science">
        <title>The complete genome sequence of Propionibacterium acnes, a commensal of human skin.</title>
        <authorList>
            <person name="Brueggemann H."/>
            <person name="Henne A."/>
            <person name="Hoster F."/>
            <person name="Liesegang H."/>
            <person name="Wiezer A."/>
            <person name="Strittmatter A."/>
            <person name="Hujer S."/>
            <person name="Duerre P."/>
            <person name="Gottschalk G."/>
        </authorList>
    </citation>
    <scope>NUCLEOTIDE SEQUENCE [LARGE SCALE GENOMIC DNA]</scope>
    <source>
        <strain>DSM 16379 / KPA171202</strain>
    </source>
</reference>
<sequence>MNILEMDLGPLAPEHPIEIIVGVILVLLLTWLIAKAVVPRFEKLYEERTETIQGGIERAERAQAEAKAALEKYQAQLASARDEAAQIRDDAKSQGAQIIAEMRANAQEEADRITERANAQIQAERDQAVREVRAEIGGLATTLASRIVGESLQDDQRVQATVDRFLSSLADEPSASNSRTVNRA</sequence>
<keyword id="KW-0066">ATP synthesis</keyword>
<keyword id="KW-1003">Cell membrane</keyword>
<keyword id="KW-0138">CF(0)</keyword>
<keyword id="KW-0375">Hydrogen ion transport</keyword>
<keyword id="KW-0406">Ion transport</keyword>
<keyword id="KW-0472">Membrane</keyword>
<keyword id="KW-0812">Transmembrane</keyword>
<keyword id="KW-1133">Transmembrane helix</keyword>
<keyword id="KW-0813">Transport</keyword>